<keyword id="KW-0067">ATP-binding</keyword>
<keyword id="KW-0418">Kinase</keyword>
<keyword id="KW-0460">Magnesium</keyword>
<keyword id="KW-0479">Metal-binding</keyword>
<keyword id="KW-0547">Nucleotide-binding</keyword>
<keyword id="KW-1185">Reference proteome</keyword>
<keyword id="KW-0784">Thiamine biosynthesis</keyword>
<keyword id="KW-0808">Transferase</keyword>
<name>THIM_HAEIN</name>
<feature type="chain" id="PRO_0000156936" description="Hydroxyethylthiazole kinase">
    <location>
        <begin position="1"/>
        <end position="265"/>
    </location>
</feature>
<feature type="binding site" evidence="1">
    <location>
        <position position="43"/>
    </location>
    <ligand>
        <name>substrate</name>
    </ligand>
</feature>
<feature type="binding site" evidence="1">
    <location>
        <position position="119"/>
    </location>
    <ligand>
        <name>ATP</name>
        <dbReference type="ChEBI" id="CHEBI:30616"/>
    </ligand>
</feature>
<feature type="binding site" evidence="1">
    <location>
        <position position="165"/>
    </location>
    <ligand>
        <name>ATP</name>
        <dbReference type="ChEBI" id="CHEBI:30616"/>
    </ligand>
</feature>
<feature type="binding site" evidence="1">
    <location>
        <position position="192"/>
    </location>
    <ligand>
        <name>substrate</name>
    </ligand>
</feature>
<organism>
    <name type="scientific">Haemophilus influenzae (strain ATCC 51907 / DSM 11121 / KW20 / Rd)</name>
    <dbReference type="NCBI Taxonomy" id="71421"/>
    <lineage>
        <taxon>Bacteria</taxon>
        <taxon>Pseudomonadati</taxon>
        <taxon>Pseudomonadota</taxon>
        <taxon>Gammaproteobacteria</taxon>
        <taxon>Pasteurellales</taxon>
        <taxon>Pasteurellaceae</taxon>
        <taxon>Haemophilus</taxon>
    </lineage>
</organism>
<evidence type="ECO:0000255" key="1">
    <source>
        <dbReference type="HAMAP-Rule" id="MF_00228"/>
    </source>
</evidence>
<comment type="function">
    <text evidence="1">Catalyzes the phosphorylation of the hydroxyl group of 4-methyl-5-beta-hydroxyethylthiazole (THZ).</text>
</comment>
<comment type="catalytic activity">
    <reaction evidence="1">
        <text>5-(2-hydroxyethyl)-4-methylthiazole + ATP = 4-methyl-5-(2-phosphooxyethyl)-thiazole + ADP + H(+)</text>
        <dbReference type="Rhea" id="RHEA:24212"/>
        <dbReference type="ChEBI" id="CHEBI:15378"/>
        <dbReference type="ChEBI" id="CHEBI:17957"/>
        <dbReference type="ChEBI" id="CHEBI:30616"/>
        <dbReference type="ChEBI" id="CHEBI:58296"/>
        <dbReference type="ChEBI" id="CHEBI:456216"/>
        <dbReference type="EC" id="2.7.1.50"/>
    </reaction>
</comment>
<comment type="cofactor">
    <cofactor evidence="1">
        <name>Mg(2+)</name>
        <dbReference type="ChEBI" id="CHEBI:18420"/>
    </cofactor>
</comment>
<comment type="pathway">
    <text evidence="1">Cofactor biosynthesis; thiamine diphosphate biosynthesis; 4-methyl-5-(2-phosphoethyl)-thiazole from 5-(2-hydroxyethyl)-4-methylthiazole: step 1/1.</text>
</comment>
<comment type="similarity">
    <text evidence="1">Belongs to the Thz kinase family.</text>
</comment>
<reference key="1">
    <citation type="journal article" date="1995" name="Science">
        <title>Whole-genome random sequencing and assembly of Haemophilus influenzae Rd.</title>
        <authorList>
            <person name="Fleischmann R.D."/>
            <person name="Adams M.D."/>
            <person name="White O."/>
            <person name="Clayton R.A."/>
            <person name="Kirkness E.F."/>
            <person name="Kerlavage A.R."/>
            <person name="Bult C.J."/>
            <person name="Tomb J.-F."/>
            <person name="Dougherty B.A."/>
            <person name="Merrick J.M."/>
            <person name="McKenney K."/>
            <person name="Sutton G.G."/>
            <person name="FitzHugh W."/>
            <person name="Fields C.A."/>
            <person name="Gocayne J.D."/>
            <person name="Scott J.D."/>
            <person name="Shirley R."/>
            <person name="Liu L.-I."/>
            <person name="Glodek A."/>
            <person name="Kelley J.M."/>
            <person name="Weidman J.F."/>
            <person name="Phillips C.A."/>
            <person name="Spriggs T."/>
            <person name="Hedblom E."/>
            <person name="Cotton M.D."/>
            <person name="Utterback T.R."/>
            <person name="Hanna M.C."/>
            <person name="Nguyen D.T."/>
            <person name="Saudek D.M."/>
            <person name="Brandon R.C."/>
            <person name="Fine L.D."/>
            <person name="Fritchman J.L."/>
            <person name="Fuhrmann J.L."/>
            <person name="Geoghagen N.S.M."/>
            <person name="Gnehm C.L."/>
            <person name="McDonald L.A."/>
            <person name="Small K.V."/>
            <person name="Fraser C.M."/>
            <person name="Smith H.O."/>
            <person name="Venter J.C."/>
        </authorList>
    </citation>
    <scope>NUCLEOTIDE SEQUENCE [LARGE SCALE GENOMIC DNA]</scope>
    <source>
        <strain>ATCC 51907 / DSM 11121 / KW20 / Rd</strain>
    </source>
</reference>
<accession>Q57233</accession>
<gene>
    <name evidence="1" type="primary">thiM</name>
    <name type="ordered locus">HI_0415</name>
</gene>
<dbReference type="EC" id="2.7.1.50" evidence="1"/>
<dbReference type="EMBL" id="L42023">
    <property type="protein sequence ID" value="AAC22073.1"/>
    <property type="molecule type" value="Genomic_DNA"/>
</dbReference>
<dbReference type="PIR" id="H64151">
    <property type="entry name" value="H64151"/>
</dbReference>
<dbReference type="RefSeq" id="NP_438577.1">
    <property type="nucleotide sequence ID" value="NC_000907.1"/>
</dbReference>
<dbReference type="SMR" id="Q57233"/>
<dbReference type="STRING" id="71421.HI_0415"/>
<dbReference type="EnsemblBacteria" id="AAC22073">
    <property type="protein sequence ID" value="AAC22073"/>
    <property type="gene ID" value="HI_0415"/>
</dbReference>
<dbReference type="KEGG" id="hin:HI_0415"/>
<dbReference type="PATRIC" id="fig|71421.8.peg.435"/>
<dbReference type="eggNOG" id="COG2145">
    <property type="taxonomic scope" value="Bacteria"/>
</dbReference>
<dbReference type="HOGENOM" id="CLU_019943_0_0_6"/>
<dbReference type="OrthoDB" id="8909021at2"/>
<dbReference type="PhylomeDB" id="Q57233"/>
<dbReference type="BioCyc" id="HINF71421:G1GJ1-430-MONOMER"/>
<dbReference type="UniPathway" id="UPA00060">
    <property type="reaction ID" value="UER00139"/>
</dbReference>
<dbReference type="Proteomes" id="UP000000579">
    <property type="component" value="Chromosome"/>
</dbReference>
<dbReference type="GO" id="GO:0005524">
    <property type="term" value="F:ATP binding"/>
    <property type="evidence" value="ECO:0007669"/>
    <property type="project" value="UniProtKB-UniRule"/>
</dbReference>
<dbReference type="GO" id="GO:0004417">
    <property type="term" value="F:hydroxyethylthiazole kinase activity"/>
    <property type="evidence" value="ECO:0007669"/>
    <property type="project" value="UniProtKB-UniRule"/>
</dbReference>
<dbReference type="GO" id="GO:0000287">
    <property type="term" value="F:magnesium ion binding"/>
    <property type="evidence" value="ECO:0007669"/>
    <property type="project" value="UniProtKB-UniRule"/>
</dbReference>
<dbReference type="GO" id="GO:0009228">
    <property type="term" value="P:thiamine biosynthetic process"/>
    <property type="evidence" value="ECO:0007669"/>
    <property type="project" value="UniProtKB-KW"/>
</dbReference>
<dbReference type="GO" id="GO:0009229">
    <property type="term" value="P:thiamine diphosphate biosynthetic process"/>
    <property type="evidence" value="ECO:0007669"/>
    <property type="project" value="UniProtKB-UniRule"/>
</dbReference>
<dbReference type="CDD" id="cd01170">
    <property type="entry name" value="THZ_kinase"/>
    <property type="match status" value="1"/>
</dbReference>
<dbReference type="Gene3D" id="3.40.1190.20">
    <property type="match status" value="1"/>
</dbReference>
<dbReference type="HAMAP" id="MF_00228">
    <property type="entry name" value="Thz_kinase"/>
    <property type="match status" value="1"/>
</dbReference>
<dbReference type="InterPro" id="IPR000417">
    <property type="entry name" value="Hyethyz_kinase"/>
</dbReference>
<dbReference type="InterPro" id="IPR029056">
    <property type="entry name" value="Ribokinase-like"/>
</dbReference>
<dbReference type="NCBIfam" id="NF006830">
    <property type="entry name" value="PRK09355.1"/>
    <property type="match status" value="1"/>
</dbReference>
<dbReference type="NCBIfam" id="TIGR00694">
    <property type="entry name" value="thiM"/>
    <property type="match status" value="1"/>
</dbReference>
<dbReference type="Pfam" id="PF02110">
    <property type="entry name" value="HK"/>
    <property type="match status" value="1"/>
</dbReference>
<dbReference type="PIRSF" id="PIRSF000513">
    <property type="entry name" value="Thz_kinase"/>
    <property type="match status" value="1"/>
</dbReference>
<dbReference type="PRINTS" id="PR01099">
    <property type="entry name" value="HYETHTZKNASE"/>
</dbReference>
<dbReference type="SUPFAM" id="SSF53613">
    <property type="entry name" value="Ribokinase-like"/>
    <property type="match status" value="1"/>
</dbReference>
<protein>
    <recommendedName>
        <fullName evidence="1">Hydroxyethylthiazole kinase</fullName>
        <ecNumber evidence="1">2.7.1.50</ecNumber>
    </recommendedName>
    <alternativeName>
        <fullName evidence="1">4-methyl-5-beta-hydroxyethylthiazole kinase</fullName>
        <shortName evidence="1">TH kinase</shortName>
        <shortName evidence="1">Thz kinase</shortName>
    </alternativeName>
</protein>
<proteinExistence type="inferred from homology"/>
<sequence length="265" mass="27733">MLMQSIYLSKIREQNPLIHNITNIVAANFSANGLLALGASPLMSANVEEMQEVPKISQALVINIGTLIGKDREAMLQAGKTANEVGIPVVLDPVGVGATSYRRETIRELLAEVKFALIRGNAGELAAIAGETWQAKGVDAGQGEVDLKAVAEKVAQRYGCTVLISGAVDIVSDGTQTATVHNGTSLFPKVTASGCLLSAVCAAFLAVSEGNYFSATLEACVAYTIAGECAAQGLTTQVGQFQIRLLDELAALSPETIGQRGRINE</sequence>